<keyword id="KW-0064">Aspartyl protease</keyword>
<keyword id="KW-0378">Hydrolase</keyword>
<keyword id="KW-0645">Protease</keyword>
<keyword id="KW-1185">Reference proteome</keyword>
<evidence type="ECO:0000305" key="1"/>
<protein>
    <recommendedName>
        <fullName>Putative hydrogenase maturation protease MJ0253</fullName>
        <ecNumber>3.4.23.-</ecNumber>
    </recommendedName>
</protein>
<reference key="1">
    <citation type="journal article" date="1996" name="Science">
        <title>Complete genome sequence of the methanogenic archaeon, Methanococcus jannaschii.</title>
        <authorList>
            <person name="Bult C.J."/>
            <person name="White O."/>
            <person name="Olsen G.J."/>
            <person name="Zhou L."/>
            <person name="Fleischmann R.D."/>
            <person name="Sutton G.G."/>
            <person name="Blake J.A."/>
            <person name="FitzGerald L.M."/>
            <person name="Clayton R.A."/>
            <person name="Gocayne J.D."/>
            <person name="Kerlavage A.R."/>
            <person name="Dougherty B.A."/>
            <person name="Tomb J.-F."/>
            <person name="Adams M.D."/>
            <person name="Reich C.I."/>
            <person name="Overbeek R."/>
            <person name="Kirkness E.F."/>
            <person name="Weinstock K.G."/>
            <person name="Merrick J.M."/>
            <person name="Glodek A."/>
            <person name="Scott J.L."/>
            <person name="Geoghagen N.S.M."/>
            <person name="Weidman J.F."/>
            <person name="Fuhrmann J.L."/>
            <person name="Nguyen D."/>
            <person name="Utterback T.R."/>
            <person name="Kelley J.M."/>
            <person name="Peterson J.D."/>
            <person name="Sadow P.W."/>
            <person name="Hanna M.C."/>
            <person name="Cotton M.D."/>
            <person name="Roberts K.M."/>
            <person name="Hurst M.A."/>
            <person name="Kaine B.P."/>
            <person name="Borodovsky M."/>
            <person name="Klenk H.-P."/>
            <person name="Fraser C.M."/>
            <person name="Smith H.O."/>
            <person name="Woese C.R."/>
            <person name="Venter J.C."/>
        </authorList>
    </citation>
    <scope>NUCLEOTIDE SEQUENCE [LARGE SCALE GENOMIC DNA]</scope>
    <source>
        <strain>ATCC 43067 / DSM 2661 / JAL-1 / JCM 10045 / NBRC 100440</strain>
    </source>
</reference>
<organism>
    <name type="scientific">Methanocaldococcus jannaschii (strain ATCC 43067 / DSM 2661 / JAL-1 / JCM 10045 / NBRC 100440)</name>
    <name type="common">Methanococcus jannaschii</name>
    <dbReference type="NCBI Taxonomy" id="243232"/>
    <lineage>
        <taxon>Archaea</taxon>
        <taxon>Methanobacteriati</taxon>
        <taxon>Methanobacteriota</taxon>
        <taxon>Methanomada group</taxon>
        <taxon>Methanococci</taxon>
        <taxon>Methanococcales</taxon>
        <taxon>Methanocaldococcaceae</taxon>
        <taxon>Methanocaldococcus</taxon>
    </lineage>
</organism>
<accession>Q57701</accession>
<sequence>MKKKDILIVGCGNLLFGDDGFGCEVVSKLEKMNLPDNVEVIDAGASGAYYLMTLVDEDIKKIIVVDAIDFDLEPGTIKKIDVDELPNIKKYSFDAHNVPLAPFLKDLHNKGIEVVVIGCQGKEFTMPDIKPGLSEEVAKAVDKAIEIILGEIKK</sequence>
<gene>
    <name type="ordered locus">MJ0253</name>
</gene>
<feature type="chain" id="PRO_0000201948" description="Putative hydrogenase maturation protease MJ0253">
    <location>
        <begin position="1"/>
        <end position="154"/>
    </location>
</feature>
<proteinExistence type="inferred from homology"/>
<comment type="similarity">
    <text evidence="1">Belongs to the peptidase A31 family.</text>
</comment>
<dbReference type="EC" id="3.4.23.-"/>
<dbReference type="EMBL" id="L77117">
    <property type="protein sequence ID" value="AAB98240.1"/>
    <property type="molecule type" value="Genomic_DNA"/>
</dbReference>
<dbReference type="PIR" id="F64331">
    <property type="entry name" value="F64331"/>
</dbReference>
<dbReference type="RefSeq" id="WP_010869751.1">
    <property type="nucleotide sequence ID" value="NC_000909.1"/>
</dbReference>
<dbReference type="SMR" id="Q57701"/>
<dbReference type="FunCoup" id="Q57701">
    <property type="interactions" value="3"/>
</dbReference>
<dbReference type="STRING" id="243232.MJ_0253"/>
<dbReference type="PaxDb" id="243232-MJ_0253"/>
<dbReference type="EnsemblBacteria" id="AAB98240">
    <property type="protein sequence ID" value="AAB98240"/>
    <property type="gene ID" value="MJ_0253"/>
</dbReference>
<dbReference type="GeneID" id="1451107"/>
<dbReference type="KEGG" id="mja:MJ_0253"/>
<dbReference type="eggNOG" id="arCOG04429">
    <property type="taxonomic scope" value="Archaea"/>
</dbReference>
<dbReference type="HOGENOM" id="CLU_099037_0_2_2"/>
<dbReference type="InParanoid" id="Q57701"/>
<dbReference type="OrthoDB" id="85598at2157"/>
<dbReference type="PhylomeDB" id="Q57701"/>
<dbReference type="Proteomes" id="UP000000805">
    <property type="component" value="Chromosome"/>
</dbReference>
<dbReference type="GO" id="GO:0004190">
    <property type="term" value="F:aspartic-type endopeptidase activity"/>
    <property type="evidence" value="ECO:0007669"/>
    <property type="project" value="UniProtKB-KW"/>
</dbReference>
<dbReference type="GO" id="GO:0004175">
    <property type="term" value="F:endopeptidase activity"/>
    <property type="evidence" value="ECO:0000318"/>
    <property type="project" value="GO_Central"/>
</dbReference>
<dbReference type="GO" id="GO:0008047">
    <property type="term" value="F:enzyme activator activity"/>
    <property type="evidence" value="ECO:0007669"/>
    <property type="project" value="InterPro"/>
</dbReference>
<dbReference type="GO" id="GO:0036211">
    <property type="term" value="P:protein modification process"/>
    <property type="evidence" value="ECO:0007669"/>
    <property type="project" value="InterPro"/>
</dbReference>
<dbReference type="GO" id="GO:0016485">
    <property type="term" value="P:protein processing"/>
    <property type="evidence" value="ECO:0000318"/>
    <property type="project" value="GO_Central"/>
</dbReference>
<dbReference type="CDD" id="cd06064">
    <property type="entry name" value="H2MP_F420-Reduc"/>
    <property type="match status" value="1"/>
</dbReference>
<dbReference type="FunFam" id="3.40.50.1450:FF:000005">
    <property type="entry name" value="Hydrogenase maturation protease HycI"/>
    <property type="match status" value="1"/>
</dbReference>
<dbReference type="Gene3D" id="3.40.50.1450">
    <property type="entry name" value="HybD-like"/>
    <property type="match status" value="1"/>
</dbReference>
<dbReference type="InterPro" id="IPR004411">
    <property type="entry name" value="Pept_A31_F420-red_hyd_d"/>
</dbReference>
<dbReference type="InterPro" id="IPR023430">
    <property type="entry name" value="Pept_HybD-like_dom_sf"/>
</dbReference>
<dbReference type="InterPro" id="IPR000671">
    <property type="entry name" value="Peptidase_A31"/>
</dbReference>
<dbReference type="NCBIfam" id="TIGR00130">
    <property type="entry name" value="frhD"/>
    <property type="match status" value="1"/>
</dbReference>
<dbReference type="NCBIfam" id="TIGR00072">
    <property type="entry name" value="hydrog_prot"/>
    <property type="match status" value="1"/>
</dbReference>
<dbReference type="PANTHER" id="PTHR30302">
    <property type="entry name" value="HYDROGENASE 1 MATURATION PROTEASE"/>
    <property type="match status" value="1"/>
</dbReference>
<dbReference type="PANTHER" id="PTHR30302:SF1">
    <property type="entry name" value="HYDROGENASE 2 MATURATION PROTEASE"/>
    <property type="match status" value="1"/>
</dbReference>
<dbReference type="Pfam" id="PF01750">
    <property type="entry name" value="HycI"/>
    <property type="match status" value="1"/>
</dbReference>
<dbReference type="PRINTS" id="PR00446">
    <property type="entry name" value="HYDRGNUPTAKE"/>
</dbReference>
<dbReference type="SUPFAM" id="SSF53163">
    <property type="entry name" value="HybD-like"/>
    <property type="match status" value="1"/>
</dbReference>
<name>Y253_METJA</name>